<keyword id="KW-0249">Electron transport</keyword>
<keyword id="KW-0274">FAD</keyword>
<keyword id="KW-0285">Flavoprotein</keyword>
<keyword id="KW-0496">Mitochondrion</keyword>
<keyword id="KW-1185">Reference proteome</keyword>
<keyword id="KW-0809">Transit peptide</keyword>
<keyword id="KW-0813">Transport</keyword>
<name>ETFA_ORYSI</name>
<accession>A2XNR6</accession>
<proteinExistence type="inferred from homology"/>
<feature type="transit peptide" description="Mitochondrion" evidence="2">
    <location>
        <begin position="1"/>
        <end status="unknown"/>
    </location>
</feature>
<feature type="chain" id="PRO_0000324179" description="Electron transfer flavoprotein subunit alpha, mitochondrial">
    <location>
        <begin status="unknown"/>
        <end position="358"/>
    </location>
</feature>
<feature type="binding site" evidence="1">
    <location>
        <begin position="298"/>
        <end position="326"/>
    </location>
    <ligand>
        <name>FAD</name>
        <dbReference type="ChEBI" id="CHEBI:57692"/>
    </ligand>
</feature>
<organism>
    <name type="scientific">Oryza sativa subsp. indica</name>
    <name type="common">Rice</name>
    <dbReference type="NCBI Taxonomy" id="39946"/>
    <lineage>
        <taxon>Eukaryota</taxon>
        <taxon>Viridiplantae</taxon>
        <taxon>Streptophyta</taxon>
        <taxon>Embryophyta</taxon>
        <taxon>Tracheophyta</taxon>
        <taxon>Spermatophyta</taxon>
        <taxon>Magnoliopsida</taxon>
        <taxon>Liliopsida</taxon>
        <taxon>Poales</taxon>
        <taxon>Poaceae</taxon>
        <taxon>BOP clade</taxon>
        <taxon>Oryzoideae</taxon>
        <taxon>Oryzeae</taxon>
        <taxon>Oryzinae</taxon>
        <taxon>Oryza</taxon>
        <taxon>Oryza sativa</taxon>
    </lineage>
</organism>
<dbReference type="EMBL" id="CM000128">
    <property type="protein sequence ID" value="EAY92476.1"/>
    <property type="molecule type" value="Genomic_DNA"/>
</dbReference>
<dbReference type="SMR" id="A2XNR6"/>
<dbReference type="STRING" id="39946.A2XNR6"/>
<dbReference type="EnsemblPlants" id="BGIOSGA013888-TA">
    <property type="protein sequence ID" value="BGIOSGA013888-PA"/>
    <property type="gene ID" value="BGIOSGA013888"/>
</dbReference>
<dbReference type="EnsemblPlants" id="OsGoSa_03g0040530.01">
    <property type="protein sequence ID" value="OsGoSa_03g0040530.01"/>
    <property type="gene ID" value="OsGoSa_03g0040530"/>
</dbReference>
<dbReference type="EnsemblPlants" id="OsIR64_03g0040360.01">
    <property type="protein sequence ID" value="OsIR64_03g0040360.01"/>
    <property type="gene ID" value="OsIR64_03g0040360"/>
</dbReference>
<dbReference type="EnsemblPlants" id="OsKYG_03g0040850.01">
    <property type="protein sequence ID" value="OsKYG_03g0040850.01"/>
    <property type="gene ID" value="OsKYG_03g0040850"/>
</dbReference>
<dbReference type="EnsemblPlants" id="OsLima_03g0040940.01">
    <property type="protein sequence ID" value="OsLima_03g0040940.01"/>
    <property type="gene ID" value="OsLima_03g0040940"/>
</dbReference>
<dbReference type="EnsemblPlants" id="OsLiXu_03g0040590.01">
    <property type="protein sequence ID" value="OsLiXu_03g0040590.01"/>
    <property type="gene ID" value="OsLiXu_03g0040590"/>
</dbReference>
<dbReference type="EnsemblPlants" id="OsMH63_03G040580_01">
    <property type="protein sequence ID" value="OsMH63_03G040580_01"/>
    <property type="gene ID" value="OsMH63_03G040580"/>
</dbReference>
<dbReference type="EnsemblPlants" id="OsMH63_03G040580_02">
    <property type="protein sequence ID" value="OsMH63_03G040580_02"/>
    <property type="gene ID" value="OsMH63_03G040580"/>
</dbReference>
<dbReference type="EnsemblPlants" id="OsPr106_03g0040600.01">
    <property type="protein sequence ID" value="OsPr106_03g0040600.01"/>
    <property type="gene ID" value="OsPr106_03g0040600"/>
</dbReference>
<dbReference type="EnsemblPlants" id="OsZS97_03G040570_01">
    <property type="protein sequence ID" value="OsZS97_03G040570_01"/>
    <property type="gene ID" value="OsZS97_03G040570"/>
</dbReference>
<dbReference type="Gramene" id="BGIOSGA013888-TA">
    <property type="protein sequence ID" value="BGIOSGA013888-PA"/>
    <property type="gene ID" value="BGIOSGA013888"/>
</dbReference>
<dbReference type="Gramene" id="OsGoSa_03g0040530.01">
    <property type="protein sequence ID" value="OsGoSa_03g0040530.01"/>
    <property type="gene ID" value="OsGoSa_03g0040530"/>
</dbReference>
<dbReference type="Gramene" id="OsIR64_03g0040360.01">
    <property type="protein sequence ID" value="OsIR64_03g0040360.01"/>
    <property type="gene ID" value="OsIR64_03g0040360"/>
</dbReference>
<dbReference type="Gramene" id="OsKYG_03g0040850.01">
    <property type="protein sequence ID" value="OsKYG_03g0040850.01"/>
    <property type="gene ID" value="OsKYG_03g0040850"/>
</dbReference>
<dbReference type="Gramene" id="OsLima_03g0040940.01">
    <property type="protein sequence ID" value="OsLima_03g0040940.01"/>
    <property type="gene ID" value="OsLima_03g0040940"/>
</dbReference>
<dbReference type="Gramene" id="OsLiXu_03g0040590.01">
    <property type="protein sequence ID" value="OsLiXu_03g0040590.01"/>
    <property type="gene ID" value="OsLiXu_03g0040590"/>
</dbReference>
<dbReference type="Gramene" id="OsMH63_03G040580_01">
    <property type="protein sequence ID" value="OsMH63_03G040580_01"/>
    <property type="gene ID" value="OsMH63_03G040580"/>
</dbReference>
<dbReference type="Gramene" id="OsMH63_03G040580_02">
    <property type="protein sequence ID" value="OsMH63_03G040580_02"/>
    <property type="gene ID" value="OsMH63_03G040580"/>
</dbReference>
<dbReference type="Gramene" id="OsPr106_03g0040600.01">
    <property type="protein sequence ID" value="OsPr106_03g0040600.01"/>
    <property type="gene ID" value="OsPr106_03g0040600"/>
</dbReference>
<dbReference type="Gramene" id="OsZS97_03G040570_01">
    <property type="protein sequence ID" value="OsZS97_03G040570_01"/>
    <property type="gene ID" value="OsZS97_03G040570"/>
</dbReference>
<dbReference type="HOGENOM" id="CLU_034178_0_0_1"/>
<dbReference type="OMA" id="HHICGIG"/>
<dbReference type="OrthoDB" id="1715808at2759"/>
<dbReference type="Proteomes" id="UP000007015">
    <property type="component" value="Chromosome 3"/>
</dbReference>
<dbReference type="GO" id="GO:0005759">
    <property type="term" value="C:mitochondrial matrix"/>
    <property type="evidence" value="ECO:0007669"/>
    <property type="project" value="UniProtKB-SubCell"/>
</dbReference>
<dbReference type="GO" id="GO:0009055">
    <property type="term" value="F:electron transfer activity"/>
    <property type="evidence" value="ECO:0007669"/>
    <property type="project" value="InterPro"/>
</dbReference>
<dbReference type="GO" id="GO:0050660">
    <property type="term" value="F:flavin adenine dinucleotide binding"/>
    <property type="evidence" value="ECO:0007669"/>
    <property type="project" value="InterPro"/>
</dbReference>
<dbReference type="GO" id="GO:0033539">
    <property type="term" value="P:fatty acid beta-oxidation using acyl-CoA dehydrogenase"/>
    <property type="evidence" value="ECO:0007669"/>
    <property type="project" value="TreeGrafter"/>
</dbReference>
<dbReference type="CDD" id="cd01715">
    <property type="entry name" value="ETF_alpha"/>
    <property type="match status" value="1"/>
</dbReference>
<dbReference type="FunFam" id="3.40.50.620:FF:000157">
    <property type="entry name" value="Electron transfer flavoprotein subunit alpha, mitochondrial"/>
    <property type="match status" value="1"/>
</dbReference>
<dbReference type="FunFam" id="3.40.50.1220:FF:000001">
    <property type="entry name" value="Electron transfer flavoprotein, alpha subunit"/>
    <property type="match status" value="1"/>
</dbReference>
<dbReference type="Gene3D" id="3.40.50.620">
    <property type="entry name" value="HUPs"/>
    <property type="match status" value="1"/>
</dbReference>
<dbReference type="Gene3D" id="3.40.50.1220">
    <property type="entry name" value="TPP-binding domain"/>
    <property type="match status" value="1"/>
</dbReference>
<dbReference type="InterPro" id="IPR029035">
    <property type="entry name" value="DHS-like_NAD/FAD-binding_dom"/>
</dbReference>
<dbReference type="InterPro" id="IPR014730">
    <property type="entry name" value="ETF_a/b_N"/>
</dbReference>
<dbReference type="InterPro" id="IPR001308">
    <property type="entry name" value="ETF_a/FixB"/>
</dbReference>
<dbReference type="InterPro" id="IPR033947">
    <property type="entry name" value="ETF_alpha_N"/>
</dbReference>
<dbReference type="InterPro" id="IPR014731">
    <property type="entry name" value="ETF_asu_C"/>
</dbReference>
<dbReference type="InterPro" id="IPR018206">
    <property type="entry name" value="ETF_asu_C_CS"/>
</dbReference>
<dbReference type="InterPro" id="IPR014729">
    <property type="entry name" value="Rossmann-like_a/b/a_fold"/>
</dbReference>
<dbReference type="PANTHER" id="PTHR43153">
    <property type="entry name" value="ELECTRON TRANSFER FLAVOPROTEIN ALPHA"/>
    <property type="match status" value="1"/>
</dbReference>
<dbReference type="PANTHER" id="PTHR43153:SF1">
    <property type="entry name" value="ELECTRON TRANSFER FLAVOPROTEIN SUBUNIT ALPHA, MITOCHONDRIAL"/>
    <property type="match status" value="1"/>
</dbReference>
<dbReference type="Pfam" id="PF01012">
    <property type="entry name" value="ETF"/>
    <property type="match status" value="1"/>
</dbReference>
<dbReference type="Pfam" id="PF00766">
    <property type="entry name" value="ETF_alpha"/>
    <property type="match status" value="1"/>
</dbReference>
<dbReference type="PIRSF" id="PIRSF000089">
    <property type="entry name" value="Electra_flavoP_a"/>
    <property type="match status" value="1"/>
</dbReference>
<dbReference type="SMART" id="SM00893">
    <property type="entry name" value="ETF"/>
    <property type="match status" value="1"/>
</dbReference>
<dbReference type="SUPFAM" id="SSF52402">
    <property type="entry name" value="Adenine nucleotide alpha hydrolases-like"/>
    <property type="match status" value="1"/>
</dbReference>
<dbReference type="SUPFAM" id="SSF52467">
    <property type="entry name" value="DHS-like NAD/FAD-binding domain"/>
    <property type="match status" value="1"/>
</dbReference>
<dbReference type="PROSITE" id="PS00696">
    <property type="entry name" value="ETF_ALPHA"/>
    <property type="match status" value="1"/>
</dbReference>
<reference key="1">
    <citation type="journal article" date="2005" name="PLoS Biol.">
        <title>The genomes of Oryza sativa: a history of duplications.</title>
        <authorList>
            <person name="Yu J."/>
            <person name="Wang J."/>
            <person name="Lin W."/>
            <person name="Li S."/>
            <person name="Li H."/>
            <person name="Zhou J."/>
            <person name="Ni P."/>
            <person name="Dong W."/>
            <person name="Hu S."/>
            <person name="Zeng C."/>
            <person name="Zhang J."/>
            <person name="Zhang Y."/>
            <person name="Li R."/>
            <person name="Xu Z."/>
            <person name="Li S."/>
            <person name="Li X."/>
            <person name="Zheng H."/>
            <person name="Cong L."/>
            <person name="Lin L."/>
            <person name="Yin J."/>
            <person name="Geng J."/>
            <person name="Li G."/>
            <person name="Shi J."/>
            <person name="Liu J."/>
            <person name="Lv H."/>
            <person name="Li J."/>
            <person name="Wang J."/>
            <person name="Deng Y."/>
            <person name="Ran L."/>
            <person name="Shi X."/>
            <person name="Wang X."/>
            <person name="Wu Q."/>
            <person name="Li C."/>
            <person name="Ren X."/>
            <person name="Wang J."/>
            <person name="Wang X."/>
            <person name="Li D."/>
            <person name="Liu D."/>
            <person name="Zhang X."/>
            <person name="Ji Z."/>
            <person name="Zhao W."/>
            <person name="Sun Y."/>
            <person name="Zhang Z."/>
            <person name="Bao J."/>
            <person name="Han Y."/>
            <person name="Dong L."/>
            <person name="Ji J."/>
            <person name="Chen P."/>
            <person name="Wu S."/>
            <person name="Liu J."/>
            <person name="Xiao Y."/>
            <person name="Bu D."/>
            <person name="Tan J."/>
            <person name="Yang L."/>
            <person name="Ye C."/>
            <person name="Zhang J."/>
            <person name="Xu J."/>
            <person name="Zhou Y."/>
            <person name="Yu Y."/>
            <person name="Zhang B."/>
            <person name="Zhuang S."/>
            <person name="Wei H."/>
            <person name="Liu B."/>
            <person name="Lei M."/>
            <person name="Yu H."/>
            <person name="Li Y."/>
            <person name="Xu H."/>
            <person name="Wei S."/>
            <person name="He X."/>
            <person name="Fang L."/>
            <person name="Zhang Z."/>
            <person name="Zhang Y."/>
            <person name="Huang X."/>
            <person name="Su Z."/>
            <person name="Tong W."/>
            <person name="Li J."/>
            <person name="Tong Z."/>
            <person name="Li S."/>
            <person name="Ye J."/>
            <person name="Wang L."/>
            <person name="Fang L."/>
            <person name="Lei T."/>
            <person name="Chen C.-S."/>
            <person name="Chen H.-C."/>
            <person name="Xu Z."/>
            <person name="Li H."/>
            <person name="Huang H."/>
            <person name="Zhang F."/>
            <person name="Xu H."/>
            <person name="Li N."/>
            <person name="Zhao C."/>
            <person name="Li S."/>
            <person name="Dong L."/>
            <person name="Huang Y."/>
            <person name="Li L."/>
            <person name="Xi Y."/>
            <person name="Qi Q."/>
            <person name="Li W."/>
            <person name="Zhang B."/>
            <person name="Hu W."/>
            <person name="Zhang Y."/>
            <person name="Tian X."/>
            <person name="Jiao Y."/>
            <person name="Liang X."/>
            <person name="Jin J."/>
            <person name="Gao L."/>
            <person name="Zheng W."/>
            <person name="Hao B."/>
            <person name="Liu S.-M."/>
            <person name="Wang W."/>
            <person name="Yuan L."/>
            <person name="Cao M."/>
            <person name="McDermott J."/>
            <person name="Samudrala R."/>
            <person name="Wang J."/>
            <person name="Wong G.K.-S."/>
            <person name="Yang H."/>
        </authorList>
    </citation>
    <scope>NUCLEOTIDE SEQUENCE [LARGE SCALE GENOMIC DNA]</scope>
    <source>
        <strain>cv. 93-11</strain>
    </source>
</reference>
<evidence type="ECO:0000250" key="1"/>
<evidence type="ECO:0000255" key="2"/>
<evidence type="ECO:0000305" key="3"/>
<gene>
    <name type="primary">ETFA</name>
    <name type="ORF">OsI_013709</name>
</gene>
<protein>
    <recommendedName>
        <fullName>Electron transfer flavoprotein subunit alpha, mitochondrial</fullName>
        <shortName>Alpha-ETF</shortName>
    </recommendedName>
</protein>
<comment type="function">
    <text evidence="1">The electron transfer flavoprotein serves as a specific electron acceptor for several dehydrogenases, including five acyl-CoA dehydrogenases, glutaryl-CoA and sarcosine dehydrogenase. It transfers the electrons to the main mitochondrial respiratory chain via ETF-ubiquinone oxidoreductase (ETF dehydrogenase) (By similarity).</text>
</comment>
<comment type="cofactor">
    <cofactor evidence="1">
        <name>FAD</name>
        <dbReference type="ChEBI" id="CHEBI:57692"/>
    </cofactor>
    <text evidence="1">Binds 1 FAD per dimer.</text>
</comment>
<comment type="subunit">
    <text evidence="1">Heterodimer of an alpha and a beta subunit.</text>
</comment>
<comment type="subcellular location">
    <subcellularLocation>
        <location evidence="1">Mitochondrion matrix</location>
    </subcellularLocation>
</comment>
<comment type="similarity">
    <text evidence="3">Belongs to the ETF alpha-subunit/FixB family.</text>
</comment>
<sequence length="358" mass="37353">MAAMVVGALRRGTATAGGSSRSFARSLPRPVSTLVVAEHEGGFVKPSSLSALAAAEAIGKDDNRVSLLLGGSGPGLHKAAEHAASSHPLVSEVLVADSDVFAHPLAEPWAELLRSVQHKGGYSHVIASSTSFGKNLLPRAAALLDVSPVTDVTSISEPRVFVRPIYAGNALCTVRYTGEDPCMMSIRSTSFSPTEAMSEAKVAPITQVDLSFLSEGSSGKSAWVNLKSQDTERPDLANAPVVVTGGRGLKSAENFKVLEQLAEKLGAAVGATRAAVDAGFVPNELQVGQTGKIVAPELYMAFGVSGAIQHLAGMRDSKVIVAVNKDADAPIFQVADYGIVADLFEVLDELLKKLPDKK</sequence>